<organism>
    <name type="scientific">Brucella abortus biovar 1 (strain 9-941)</name>
    <dbReference type="NCBI Taxonomy" id="262698"/>
    <lineage>
        <taxon>Bacteria</taxon>
        <taxon>Pseudomonadati</taxon>
        <taxon>Pseudomonadota</taxon>
        <taxon>Alphaproteobacteria</taxon>
        <taxon>Hyphomicrobiales</taxon>
        <taxon>Brucellaceae</taxon>
        <taxon>Brucella/Ochrobactrum group</taxon>
        <taxon>Brucella</taxon>
    </lineage>
</organism>
<sequence length="220" mass="25223">MAISSVENGVARRGLMVVISSPSGAGKSTIARLLLEDPKMKLSLSISVTTRQRRPSEIDGVHYHFITIREFERLRDNDELIEWAEVHGNFYGTLRETAEIALADGQDMLFDIDWQGADQLQAKMPADVVSIFILPPTMRELQQRLNRRAEDTAEVIETRLQNARFEIQKWVKYDYIVINEDLDRSYAAIKSIINAERLRRDRRPGLFDFVTGLLEEDPGM</sequence>
<proteinExistence type="inferred from homology"/>
<reference key="1">
    <citation type="journal article" date="2005" name="J. Bacteriol.">
        <title>Completion of the genome sequence of Brucella abortus and comparison to the highly similar genomes of Brucella melitensis and Brucella suis.</title>
        <authorList>
            <person name="Halling S.M."/>
            <person name="Peterson-Burch B.D."/>
            <person name="Bricker B.J."/>
            <person name="Zuerner R.L."/>
            <person name="Qing Z."/>
            <person name="Li L.-L."/>
            <person name="Kapur V."/>
            <person name="Alt D.P."/>
            <person name="Olsen S.C."/>
        </authorList>
    </citation>
    <scope>NUCLEOTIDE SEQUENCE [LARGE SCALE GENOMIC DNA]</scope>
    <source>
        <strain>9-941</strain>
    </source>
</reference>
<dbReference type="EC" id="2.7.4.8" evidence="1"/>
<dbReference type="EMBL" id="AE017223">
    <property type="protein sequence ID" value="AAX73881.1"/>
    <property type="molecule type" value="Genomic_DNA"/>
</dbReference>
<dbReference type="RefSeq" id="WP_002963622.1">
    <property type="nucleotide sequence ID" value="NC_006932.1"/>
</dbReference>
<dbReference type="SMR" id="Q57EQ3"/>
<dbReference type="EnsemblBacteria" id="AAX73881">
    <property type="protein sequence ID" value="AAX73881"/>
    <property type="gene ID" value="BruAb1_0486"/>
</dbReference>
<dbReference type="GeneID" id="97534168"/>
<dbReference type="KEGG" id="bmb:BruAb1_0486"/>
<dbReference type="HOGENOM" id="CLU_001715_1_0_5"/>
<dbReference type="Proteomes" id="UP000000540">
    <property type="component" value="Chromosome I"/>
</dbReference>
<dbReference type="GO" id="GO:0005829">
    <property type="term" value="C:cytosol"/>
    <property type="evidence" value="ECO:0007669"/>
    <property type="project" value="TreeGrafter"/>
</dbReference>
<dbReference type="GO" id="GO:0005524">
    <property type="term" value="F:ATP binding"/>
    <property type="evidence" value="ECO:0007669"/>
    <property type="project" value="UniProtKB-UniRule"/>
</dbReference>
<dbReference type="GO" id="GO:0004385">
    <property type="term" value="F:guanylate kinase activity"/>
    <property type="evidence" value="ECO:0007669"/>
    <property type="project" value="UniProtKB-UniRule"/>
</dbReference>
<dbReference type="CDD" id="cd00071">
    <property type="entry name" value="GMPK"/>
    <property type="match status" value="1"/>
</dbReference>
<dbReference type="FunFam" id="3.30.63.10:FF:000005">
    <property type="entry name" value="Guanylate kinase"/>
    <property type="match status" value="1"/>
</dbReference>
<dbReference type="Gene3D" id="3.30.63.10">
    <property type="entry name" value="Guanylate Kinase phosphate binding domain"/>
    <property type="match status" value="1"/>
</dbReference>
<dbReference type="Gene3D" id="3.40.50.300">
    <property type="entry name" value="P-loop containing nucleotide triphosphate hydrolases"/>
    <property type="match status" value="1"/>
</dbReference>
<dbReference type="HAMAP" id="MF_00328">
    <property type="entry name" value="Guanylate_kinase"/>
    <property type="match status" value="1"/>
</dbReference>
<dbReference type="InterPro" id="IPR008145">
    <property type="entry name" value="GK/Ca_channel_bsu"/>
</dbReference>
<dbReference type="InterPro" id="IPR008144">
    <property type="entry name" value="Guanylate_kin-like_dom"/>
</dbReference>
<dbReference type="InterPro" id="IPR017665">
    <property type="entry name" value="Guanylate_kinase"/>
</dbReference>
<dbReference type="InterPro" id="IPR020590">
    <property type="entry name" value="Guanylate_kinase_CS"/>
</dbReference>
<dbReference type="InterPro" id="IPR027417">
    <property type="entry name" value="P-loop_NTPase"/>
</dbReference>
<dbReference type="NCBIfam" id="TIGR03263">
    <property type="entry name" value="guanyl_kin"/>
    <property type="match status" value="1"/>
</dbReference>
<dbReference type="PANTHER" id="PTHR23117:SF13">
    <property type="entry name" value="GUANYLATE KINASE"/>
    <property type="match status" value="1"/>
</dbReference>
<dbReference type="PANTHER" id="PTHR23117">
    <property type="entry name" value="GUANYLATE KINASE-RELATED"/>
    <property type="match status" value="1"/>
</dbReference>
<dbReference type="Pfam" id="PF00625">
    <property type="entry name" value="Guanylate_kin"/>
    <property type="match status" value="1"/>
</dbReference>
<dbReference type="SMART" id="SM00072">
    <property type="entry name" value="GuKc"/>
    <property type="match status" value="1"/>
</dbReference>
<dbReference type="SUPFAM" id="SSF52540">
    <property type="entry name" value="P-loop containing nucleoside triphosphate hydrolases"/>
    <property type="match status" value="1"/>
</dbReference>
<dbReference type="PROSITE" id="PS00856">
    <property type="entry name" value="GUANYLATE_KINASE_1"/>
    <property type="match status" value="1"/>
</dbReference>
<dbReference type="PROSITE" id="PS50052">
    <property type="entry name" value="GUANYLATE_KINASE_2"/>
    <property type="match status" value="1"/>
</dbReference>
<gene>
    <name evidence="1" type="primary">gmk</name>
    <name type="ordered locus">BruAb1_0486</name>
</gene>
<keyword id="KW-0067">ATP-binding</keyword>
<keyword id="KW-0963">Cytoplasm</keyword>
<keyword id="KW-0418">Kinase</keyword>
<keyword id="KW-0547">Nucleotide-binding</keyword>
<keyword id="KW-0808">Transferase</keyword>
<name>KGUA_BRUAB</name>
<evidence type="ECO:0000255" key="1">
    <source>
        <dbReference type="HAMAP-Rule" id="MF_00328"/>
    </source>
</evidence>
<feature type="chain" id="PRO_0000266293" description="Guanylate kinase">
    <location>
        <begin position="1"/>
        <end position="220"/>
    </location>
</feature>
<feature type="domain" description="Guanylate kinase-like" evidence="1">
    <location>
        <begin position="14"/>
        <end position="194"/>
    </location>
</feature>
<feature type="binding site" evidence="1">
    <location>
        <begin position="21"/>
        <end position="28"/>
    </location>
    <ligand>
        <name>ATP</name>
        <dbReference type="ChEBI" id="CHEBI:30616"/>
    </ligand>
</feature>
<comment type="function">
    <text evidence="1">Essential for recycling GMP and indirectly, cGMP.</text>
</comment>
<comment type="catalytic activity">
    <reaction evidence="1">
        <text>GMP + ATP = GDP + ADP</text>
        <dbReference type="Rhea" id="RHEA:20780"/>
        <dbReference type="ChEBI" id="CHEBI:30616"/>
        <dbReference type="ChEBI" id="CHEBI:58115"/>
        <dbReference type="ChEBI" id="CHEBI:58189"/>
        <dbReference type="ChEBI" id="CHEBI:456216"/>
        <dbReference type="EC" id="2.7.4.8"/>
    </reaction>
</comment>
<comment type="subcellular location">
    <subcellularLocation>
        <location evidence="1">Cytoplasm</location>
    </subcellularLocation>
</comment>
<comment type="similarity">
    <text evidence="1">Belongs to the guanylate kinase family.</text>
</comment>
<accession>Q57EQ3</accession>
<protein>
    <recommendedName>
        <fullName evidence="1">Guanylate kinase</fullName>
        <ecNumber evidence="1">2.7.4.8</ecNumber>
    </recommendedName>
    <alternativeName>
        <fullName evidence="1">GMP kinase</fullName>
    </alternativeName>
</protein>